<proteinExistence type="inferred from homology"/>
<comment type="function">
    <text evidence="1">Specifically methylates the pseudouridine at position 1915 (m3Psi1915) in 23S rRNA.</text>
</comment>
<comment type="catalytic activity">
    <reaction evidence="1">
        <text>pseudouridine(1915) in 23S rRNA + S-adenosyl-L-methionine = N(3)-methylpseudouridine(1915) in 23S rRNA + S-adenosyl-L-homocysteine + H(+)</text>
        <dbReference type="Rhea" id="RHEA:42752"/>
        <dbReference type="Rhea" id="RHEA-COMP:10221"/>
        <dbReference type="Rhea" id="RHEA-COMP:10222"/>
        <dbReference type="ChEBI" id="CHEBI:15378"/>
        <dbReference type="ChEBI" id="CHEBI:57856"/>
        <dbReference type="ChEBI" id="CHEBI:59789"/>
        <dbReference type="ChEBI" id="CHEBI:65314"/>
        <dbReference type="ChEBI" id="CHEBI:74486"/>
        <dbReference type="EC" id="2.1.1.177"/>
    </reaction>
</comment>
<comment type="subunit">
    <text evidence="1">Homodimer.</text>
</comment>
<comment type="subcellular location">
    <subcellularLocation>
        <location evidence="1">Cytoplasm</location>
    </subcellularLocation>
</comment>
<comment type="similarity">
    <text evidence="1">Belongs to the RNA methyltransferase RlmH family.</text>
</comment>
<organism>
    <name type="scientific">Shigella flexneri serotype 5b (strain 8401)</name>
    <dbReference type="NCBI Taxonomy" id="373384"/>
    <lineage>
        <taxon>Bacteria</taxon>
        <taxon>Pseudomonadati</taxon>
        <taxon>Pseudomonadota</taxon>
        <taxon>Gammaproteobacteria</taxon>
        <taxon>Enterobacterales</taxon>
        <taxon>Enterobacteriaceae</taxon>
        <taxon>Shigella</taxon>
    </lineage>
</organism>
<protein>
    <recommendedName>
        <fullName evidence="1">Ribosomal RNA large subunit methyltransferase H</fullName>
        <ecNumber evidence="1">2.1.1.177</ecNumber>
    </recommendedName>
    <alternativeName>
        <fullName evidence="1">23S rRNA (pseudouridine1915-N3)-methyltransferase</fullName>
    </alternativeName>
    <alternativeName>
        <fullName evidence="1">23S rRNA m3Psi1915 methyltransferase</fullName>
    </alternativeName>
    <alternativeName>
        <fullName evidence="1">rRNA (pseudouridine-N3-)-methyltransferase RlmH</fullName>
    </alternativeName>
</protein>
<gene>
    <name evidence="1" type="primary">rlmH</name>
    <name type="ordered locus">SFV_0690</name>
</gene>
<accession>Q0T6P6</accession>
<evidence type="ECO:0000255" key="1">
    <source>
        <dbReference type="HAMAP-Rule" id="MF_00658"/>
    </source>
</evidence>
<sequence length="155" mass="17341">MKLQLVAVGTKMPDWVQTGFTEYLRRFPKDMPFELIEIPAGKRGKNADIKRILDKEGEQMLAAAGKNRIVTLDIPGKPWDTPQLAAELERWKLDGRDVSLLIGGPEGLSPACKAAAEQSWSLSALTLPHPLVRVLVAESLYRAWSITTNHPYHRE</sequence>
<keyword id="KW-0963">Cytoplasm</keyword>
<keyword id="KW-0489">Methyltransferase</keyword>
<keyword id="KW-0698">rRNA processing</keyword>
<keyword id="KW-0949">S-adenosyl-L-methionine</keyword>
<keyword id="KW-0808">Transferase</keyword>
<dbReference type="EC" id="2.1.1.177" evidence="1"/>
<dbReference type="EMBL" id="CP000266">
    <property type="protein sequence ID" value="ABF02930.1"/>
    <property type="molecule type" value="Genomic_DNA"/>
</dbReference>
<dbReference type="RefSeq" id="WP_000776104.1">
    <property type="nucleotide sequence ID" value="NC_008258.1"/>
</dbReference>
<dbReference type="SMR" id="Q0T6P6"/>
<dbReference type="GeneID" id="93776846"/>
<dbReference type="KEGG" id="sfv:SFV_0690"/>
<dbReference type="HOGENOM" id="CLU_100552_1_0_6"/>
<dbReference type="Proteomes" id="UP000000659">
    <property type="component" value="Chromosome"/>
</dbReference>
<dbReference type="GO" id="GO:0005737">
    <property type="term" value="C:cytoplasm"/>
    <property type="evidence" value="ECO:0007669"/>
    <property type="project" value="UniProtKB-SubCell"/>
</dbReference>
<dbReference type="GO" id="GO:0070038">
    <property type="term" value="F:rRNA (pseudouridine-N3-)-methyltransferase activity"/>
    <property type="evidence" value="ECO:0007669"/>
    <property type="project" value="UniProtKB-UniRule"/>
</dbReference>
<dbReference type="CDD" id="cd18081">
    <property type="entry name" value="RlmH-like"/>
    <property type="match status" value="1"/>
</dbReference>
<dbReference type="FunFam" id="3.40.1280.10:FF:000004">
    <property type="entry name" value="Ribosomal RNA large subunit methyltransferase H"/>
    <property type="match status" value="1"/>
</dbReference>
<dbReference type="Gene3D" id="3.40.1280.10">
    <property type="match status" value="1"/>
</dbReference>
<dbReference type="HAMAP" id="MF_00658">
    <property type="entry name" value="23SrRNA_methyltr_H"/>
    <property type="match status" value="1"/>
</dbReference>
<dbReference type="InterPro" id="IPR029028">
    <property type="entry name" value="Alpha/beta_knot_MTases"/>
</dbReference>
<dbReference type="InterPro" id="IPR003742">
    <property type="entry name" value="RlmH-like"/>
</dbReference>
<dbReference type="InterPro" id="IPR029026">
    <property type="entry name" value="tRNA_m1G_MTases_N"/>
</dbReference>
<dbReference type="NCBIfam" id="NF000984">
    <property type="entry name" value="PRK00103.1-1"/>
    <property type="match status" value="1"/>
</dbReference>
<dbReference type="NCBIfam" id="NF000986">
    <property type="entry name" value="PRK00103.1-4"/>
    <property type="match status" value="1"/>
</dbReference>
<dbReference type="NCBIfam" id="TIGR00246">
    <property type="entry name" value="tRNA_RlmH_YbeA"/>
    <property type="match status" value="1"/>
</dbReference>
<dbReference type="PANTHER" id="PTHR33603">
    <property type="entry name" value="METHYLTRANSFERASE"/>
    <property type="match status" value="1"/>
</dbReference>
<dbReference type="PANTHER" id="PTHR33603:SF1">
    <property type="entry name" value="RIBOSOMAL RNA LARGE SUBUNIT METHYLTRANSFERASE H"/>
    <property type="match status" value="1"/>
</dbReference>
<dbReference type="Pfam" id="PF02590">
    <property type="entry name" value="SPOUT_MTase"/>
    <property type="match status" value="1"/>
</dbReference>
<dbReference type="PIRSF" id="PIRSF004505">
    <property type="entry name" value="MT_bac"/>
    <property type="match status" value="1"/>
</dbReference>
<dbReference type="SUPFAM" id="SSF75217">
    <property type="entry name" value="alpha/beta knot"/>
    <property type="match status" value="1"/>
</dbReference>
<reference key="1">
    <citation type="journal article" date="2006" name="BMC Genomics">
        <title>Complete genome sequence of Shigella flexneri 5b and comparison with Shigella flexneri 2a.</title>
        <authorList>
            <person name="Nie H."/>
            <person name="Yang F."/>
            <person name="Zhang X."/>
            <person name="Yang J."/>
            <person name="Chen L."/>
            <person name="Wang J."/>
            <person name="Xiong Z."/>
            <person name="Peng J."/>
            <person name="Sun L."/>
            <person name="Dong J."/>
            <person name="Xue Y."/>
            <person name="Xu X."/>
            <person name="Chen S."/>
            <person name="Yao Z."/>
            <person name="Shen Y."/>
            <person name="Jin Q."/>
        </authorList>
    </citation>
    <scope>NUCLEOTIDE SEQUENCE [LARGE SCALE GENOMIC DNA]</scope>
    <source>
        <strain>8401</strain>
    </source>
</reference>
<name>RLMH_SHIF8</name>
<feature type="chain" id="PRO_1000061842" description="Ribosomal RNA large subunit methyltransferase H">
    <location>
        <begin position="1"/>
        <end position="155"/>
    </location>
</feature>
<feature type="binding site" evidence="1">
    <location>
        <position position="72"/>
    </location>
    <ligand>
        <name>S-adenosyl-L-methionine</name>
        <dbReference type="ChEBI" id="CHEBI:59789"/>
    </ligand>
</feature>
<feature type="binding site" evidence="1">
    <location>
        <position position="103"/>
    </location>
    <ligand>
        <name>S-adenosyl-L-methionine</name>
        <dbReference type="ChEBI" id="CHEBI:59789"/>
    </ligand>
</feature>
<feature type="binding site" evidence="1">
    <location>
        <begin position="122"/>
        <end position="127"/>
    </location>
    <ligand>
        <name>S-adenosyl-L-methionine</name>
        <dbReference type="ChEBI" id="CHEBI:59789"/>
    </ligand>
</feature>